<dbReference type="EC" id="2.7.11.1"/>
<dbReference type="EMBL" id="AF243438">
    <property type="protein sequence ID" value="AAG14266.1"/>
    <property type="molecule type" value="Genomic_DNA"/>
</dbReference>
<dbReference type="RefSeq" id="YP_001034009.1">
    <property type="nucleotide sequence ID" value="NC_002229.3"/>
</dbReference>
<dbReference type="SMR" id="Q9E6L8"/>
<dbReference type="GeneID" id="4811451"/>
<dbReference type="KEGG" id="vg:4811451"/>
<dbReference type="Proteomes" id="UP000008072">
    <property type="component" value="Segment"/>
</dbReference>
<dbReference type="GO" id="GO:0030430">
    <property type="term" value="C:host cell cytoplasm"/>
    <property type="evidence" value="ECO:0007669"/>
    <property type="project" value="UniProtKB-SubCell"/>
</dbReference>
<dbReference type="GO" id="GO:0042025">
    <property type="term" value="C:host cell nucleus"/>
    <property type="evidence" value="ECO:0007669"/>
    <property type="project" value="UniProtKB-SubCell"/>
</dbReference>
<dbReference type="GO" id="GO:0005524">
    <property type="term" value="F:ATP binding"/>
    <property type="evidence" value="ECO:0007669"/>
    <property type="project" value="UniProtKB-KW"/>
</dbReference>
<dbReference type="GO" id="GO:0106310">
    <property type="term" value="F:protein serine kinase activity"/>
    <property type="evidence" value="ECO:0007669"/>
    <property type="project" value="RHEA"/>
</dbReference>
<dbReference type="GO" id="GO:0004674">
    <property type="term" value="F:protein serine/threonine kinase activity"/>
    <property type="evidence" value="ECO:0007669"/>
    <property type="project" value="UniProtKB-KW"/>
</dbReference>
<dbReference type="GO" id="GO:0052150">
    <property type="term" value="P:symbiont-mediated perturbation of host apoptosis"/>
    <property type="evidence" value="ECO:0007669"/>
    <property type="project" value="UniProtKB-KW"/>
</dbReference>
<dbReference type="GO" id="GO:0039525">
    <property type="term" value="P:symbiont-mediated perturbation of host chromatin organization"/>
    <property type="evidence" value="ECO:0007669"/>
    <property type="project" value="UniProtKB-KW"/>
</dbReference>
<dbReference type="CDD" id="cd00180">
    <property type="entry name" value="PKc"/>
    <property type="match status" value="1"/>
</dbReference>
<dbReference type="Gene3D" id="3.30.200.20">
    <property type="entry name" value="Phosphorylase Kinase, domain 1"/>
    <property type="match status" value="1"/>
</dbReference>
<dbReference type="Gene3D" id="1.10.510.10">
    <property type="entry name" value="Transferase(Phosphotransferase) domain 1"/>
    <property type="match status" value="1"/>
</dbReference>
<dbReference type="InterPro" id="IPR011009">
    <property type="entry name" value="Kinase-like_dom_sf"/>
</dbReference>
<dbReference type="InterPro" id="IPR000719">
    <property type="entry name" value="Prot_kinase_dom"/>
</dbReference>
<dbReference type="InterPro" id="IPR008271">
    <property type="entry name" value="Ser/Thr_kinase_AS"/>
</dbReference>
<dbReference type="PANTHER" id="PTHR44167">
    <property type="entry name" value="OVARIAN-SPECIFIC SERINE/THREONINE-PROTEIN KINASE LOK-RELATED"/>
    <property type="match status" value="1"/>
</dbReference>
<dbReference type="PANTHER" id="PTHR44167:SF24">
    <property type="entry name" value="SERINE_THREONINE-PROTEIN KINASE CHK2"/>
    <property type="match status" value="1"/>
</dbReference>
<dbReference type="Pfam" id="PF00069">
    <property type="entry name" value="Pkinase"/>
    <property type="match status" value="1"/>
</dbReference>
<dbReference type="SMART" id="SM00220">
    <property type="entry name" value="S_TKc"/>
    <property type="match status" value="1"/>
</dbReference>
<dbReference type="SUPFAM" id="SSF56112">
    <property type="entry name" value="Protein kinase-like (PK-like)"/>
    <property type="match status" value="1"/>
</dbReference>
<dbReference type="PROSITE" id="PS50011">
    <property type="entry name" value="PROTEIN_KINASE_DOM"/>
    <property type="match status" value="1"/>
</dbReference>
<dbReference type="PROSITE" id="PS00108">
    <property type="entry name" value="PROTEIN_KINASE_ST"/>
    <property type="match status" value="1"/>
</dbReference>
<reference key="1">
    <citation type="journal article" date="2000" name="J. Virol.">
        <title>The genome of a very virulent Marek's disease virus.</title>
        <authorList>
            <person name="Tulman E.R."/>
            <person name="Afonso C.L."/>
            <person name="Lu Z."/>
            <person name="Zsak L."/>
            <person name="Rock D.L."/>
            <person name="Kutish G.F."/>
        </authorList>
    </citation>
    <scope>NUCLEOTIDE SEQUENCE [LARGE SCALE GENOMIC DNA]</scope>
</reference>
<feature type="chain" id="PRO_0000406504" description="Protein kinase US3 homolog">
    <location>
        <begin position="1"/>
        <end position="402"/>
    </location>
</feature>
<feature type="domain" description="Protein kinase" evidence="2">
    <location>
        <begin position="102"/>
        <end position="386"/>
    </location>
</feature>
<feature type="region of interest" description="Disordered" evidence="4">
    <location>
        <begin position="1"/>
        <end position="21"/>
    </location>
</feature>
<feature type="region of interest" description="Disordered" evidence="4">
    <location>
        <begin position="46"/>
        <end position="88"/>
    </location>
</feature>
<feature type="active site" description="Proton acceptor" evidence="2 3">
    <location>
        <position position="218"/>
    </location>
</feature>
<feature type="binding site" evidence="2">
    <location>
        <begin position="108"/>
        <end position="116"/>
    </location>
    <ligand>
        <name>ATP</name>
        <dbReference type="ChEBI" id="CHEBI:30616"/>
    </ligand>
</feature>
<feature type="binding site" evidence="2">
    <location>
        <position position="129"/>
    </location>
    <ligand>
        <name>ATP</name>
        <dbReference type="ChEBI" id="CHEBI:30616"/>
    </ligand>
</feature>
<accession>Q9E6L8</accession>
<organismHost>
    <name type="scientific">Gallus gallus</name>
    <name type="common">Chicken</name>
    <dbReference type="NCBI Taxonomy" id="9031"/>
</organismHost>
<evidence type="ECO:0000250" key="1"/>
<evidence type="ECO:0000255" key="2">
    <source>
        <dbReference type="PROSITE-ProRule" id="PRU00159"/>
    </source>
</evidence>
<evidence type="ECO:0000255" key="3">
    <source>
        <dbReference type="PROSITE-ProRule" id="PRU10027"/>
    </source>
</evidence>
<evidence type="ECO:0000256" key="4">
    <source>
        <dbReference type="SAM" id="MobiDB-lite"/>
    </source>
</evidence>
<name>US03_GAHVM</name>
<keyword id="KW-0067">ATP-binding</keyword>
<keyword id="KW-1035">Host cytoplasm</keyword>
<keyword id="KW-1048">Host nucleus</keyword>
<keyword id="KW-0945">Host-virus interaction</keyword>
<keyword id="KW-0418">Kinase</keyword>
<keyword id="KW-1119">Modulation of host cell apoptosis by virus</keyword>
<keyword id="KW-1122">Modulation of host chromatin by virus</keyword>
<keyword id="KW-0547">Nucleotide-binding</keyword>
<keyword id="KW-1185">Reference proteome</keyword>
<keyword id="KW-0723">Serine/threonine-protein kinase</keyword>
<keyword id="KW-0808">Transferase</keyword>
<comment type="function">
    <text evidence="1">Multifunctional serine/threonine kinase that plays a role in several processes including egress of virus particles from the nucleus, modulation of the actin cytoskeleton and inhibition of apoptosis. Phosphorylates UL31 and UL34 homologs, two critical regulators of capsid budding from nucleus to endoplasmic reticulum, thereby facilitating virion egress. Modulates and redistributes host components of the nuclear envelope, including LMNA, emerin/EMD and the nuclear matrix protein MATR3. Phosphorylates envelope glycoprotein B (gB), probably to direct it to the cell surface. Promotes virus intracellular spread by restructuring host cell cytoskeleton. Blocks host apoptosis to extend cell survival and allow efficient viral replication. Promotes viral gene expression by phosphorylating host HDAC2 to reduce viral genome silencing (By similarity).</text>
</comment>
<comment type="catalytic activity">
    <reaction>
        <text>L-seryl-[protein] + ATP = O-phospho-L-seryl-[protein] + ADP + H(+)</text>
        <dbReference type="Rhea" id="RHEA:17989"/>
        <dbReference type="Rhea" id="RHEA-COMP:9863"/>
        <dbReference type="Rhea" id="RHEA-COMP:11604"/>
        <dbReference type="ChEBI" id="CHEBI:15378"/>
        <dbReference type="ChEBI" id="CHEBI:29999"/>
        <dbReference type="ChEBI" id="CHEBI:30616"/>
        <dbReference type="ChEBI" id="CHEBI:83421"/>
        <dbReference type="ChEBI" id="CHEBI:456216"/>
        <dbReference type="EC" id="2.7.11.1"/>
    </reaction>
</comment>
<comment type="catalytic activity">
    <reaction>
        <text>L-threonyl-[protein] + ATP = O-phospho-L-threonyl-[protein] + ADP + H(+)</text>
        <dbReference type="Rhea" id="RHEA:46608"/>
        <dbReference type="Rhea" id="RHEA-COMP:11060"/>
        <dbReference type="Rhea" id="RHEA-COMP:11605"/>
        <dbReference type="ChEBI" id="CHEBI:15378"/>
        <dbReference type="ChEBI" id="CHEBI:30013"/>
        <dbReference type="ChEBI" id="CHEBI:30616"/>
        <dbReference type="ChEBI" id="CHEBI:61977"/>
        <dbReference type="ChEBI" id="CHEBI:456216"/>
        <dbReference type="EC" id="2.7.11.1"/>
    </reaction>
</comment>
<comment type="subcellular location">
    <subcellularLocation>
        <location evidence="1">Host cytoplasm</location>
    </subcellularLocation>
    <subcellularLocation>
        <location evidence="1">Host nucleus</location>
    </subcellularLocation>
</comment>
<comment type="PTM">
    <text evidence="1">Phosphorylated by UL13 homolog; this phosphorylation regulates subsequent phosphorylation of UL31 and UL34 homologs by US3. Autophosphorylated (By similarity).</text>
</comment>
<comment type="similarity">
    <text evidence="2">Belongs to the protein kinase superfamily. Ser/Thr protein kinase family.</text>
</comment>
<protein>
    <recommendedName>
        <fullName>Protein kinase US3 homolog</fullName>
        <ecNumber>2.7.11.1</ecNumber>
    </recommendedName>
</protein>
<sequence length="402" mass="44691">MSSSPEAETMECGISSSKVHDSKTNTTYGIIHNSINGTDTTLFDTFPDSTDNAEVTGDVDDVKTESSPESQSEDLSPFGNDGNESPETVTDIDAVSAVRMQYNIVSSLSPGSEGYIYVCTKRGDNTKRKVIVKAVTGGKTLGSEIDILKKMSHRSIIRLVHAYRWKSTVCMVMPKYKCDLFTYIDIMGPLPLNQIITIERGLLGALAYIHEKGIIHRDVKTENIFLDKPENVVLGDFGAACKLDEHTDKPKCYGWSGTLETNSPELLALDPYCTKTDIWSAGLVLFEMSVKNITFFGKQVNGSGSQLRSIIRCLQVHPLEFPQNNSTNLCKHFKQYAIQLRHPYAIPQIIRKSGMTMDLEYAIAKMLTFDQEFRPSAQDILMLPLFTKEPADALYTITAAHM</sequence>
<gene>
    <name type="primary">MDV092</name>
</gene>
<proteinExistence type="inferred from homology"/>
<organism>
    <name type="scientific">Gallid herpesvirus 2 (strain Chicken/Md5/ATCC VR-987)</name>
    <name type="common">GaHV-2</name>
    <name type="synonym">Marek's disease herpesvirus type 1</name>
    <dbReference type="NCBI Taxonomy" id="10389"/>
    <lineage>
        <taxon>Viruses</taxon>
        <taxon>Duplodnaviria</taxon>
        <taxon>Heunggongvirae</taxon>
        <taxon>Peploviricota</taxon>
        <taxon>Herviviricetes</taxon>
        <taxon>Herpesvirales</taxon>
        <taxon>Orthoherpesviridae</taxon>
        <taxon>Alphaherpesvirinae</taxon>
        <taxon>Mardivirus</taxon>
        <taxon>Mardivirus gallidalpha2</taxon>
        <taxon>Gallid alphaherpesvirus 2</taxon>
    </lineage>
</organism>